<organism>
    <name type="scientific">Leptospira borgpetersenii serovar Hardjo-bovis (strain JB197)</name>
    <dbReference type="NCBI Taxonomy" id="355277"/>
    <lineage>
        <taxon>Bacteria</taxon>
        <taxon>Pseudomonadati</taxon>
        <taxon>Spirochaetota</taxon>
        <taxon>Spirochaetia</taxon>
        <taxon>Leptospirales</taxon>
        <taxon>Leptospiraceae</taxon>
        <taxon>Leptospira</taxon>
    </lineage>
</organism>
<dbReference type="EMBL" id="CP000351">
    <property type="protein sequence ID" value="ABJ77599.1"/>
    <property type="molecule type" value="Genomic_DNA"/>
</dbReference>
<dbReference type="RefSeq" id="WP_002733336.1">
    <property type="nucleotide sequence ID" value="NC_008511.1"/>
</dbReference>
<dbReference type="SMR" id="Q04NC1"/>
<dbReference type="GeneID" id="61175504"/>
<dbReference type="KEGG" id="lbj:LBJ_4220"/>
<dbReference type="HOGENOM" id="CLU_074944_0_1_12"/>
<dbReference type="UniPathway" id="UPA00345"/>
<dbReference type="Proteomes" id="UP000000656">
    <property type="component" value="Chromosome 2"/>
</dbReference>
<dbReference type="GO" id="GO:0005737">
    <property type="term" value="C:cytoplasm"/>
    <property type="evidence" value="ECO:0007669"/>
    <property type="project" value="UniProtKB-SubCell"/>
</dbReference>
<dbReference type="GO" id="GO:0003746">
    <property type="term" value="F:translation elongation factor activity"/>
    <property type="evidence" value="ECO:0007669"/>
    <property type="project" value="UniProtKB-UniRule"/>
</dbReference>
<dbReference type="GO" id="GO:0043043">
    <property type="term" value="P:peptide biosynthetic process"/>
    <property type="evidence" value="ECO:0007669"/>
    <property type="project" value="InterPro"/>
</dbReference>
<dbReference type="CDD" id="cd04470">
    <property type="entry name" value="S1_EF-P_repeat_1"/>
    <property type="match status" value="1"/>
</dbReference>
<dbReference type="CDD" id="cd05794">
    <property type="entry name" value="S1_EF-P_repeat_2"/>
    <property type="match status" value="1"/>
</dbReference>
<dbReference type="FunFam" id="2.30.30.30:FF:000003">
    <property type="entry name" value="Elongation factor P"/>
    <property type="match status" value="1"/>
</dbReference>
<dbReference type="FunFam" id="2.40.50.140:FF:000004">
    <property type="entry name" value="Elongation factor P"/>
    <property type="match status" value="1"/>
</dbReference>
<dbReference type="FunFam" id="2.40.50.140:FF:000009">
    <property type="entry name" value="Elongation factor P"/>
    <property type="match status" value="1"/>
</dbReference>
<dbReference type="Gene3D" id="2.30.30.30">
    <property type="match status" value="1"/>
</dbReference>
<dbReference type="Gene3D" id="2.40.50.140">
    <property type="entry name" value="Nucleic acid-binding proteins"/>
    <property type="match status" value="2"/>
</dbReference>
<dbReference type="HAMAP" id="MF_00141">
    <property type="entry name" value="EF_P"/>
    <property type="match status" value="1"/>
</dbReference>
<dbReference type="InterPro" id="IPR015365">
    <property type="entry name" value="Elong-fact-P_C"/>
</dbReference>
<dbReference type="InterPro" id="IPR012340">
    <property type="entry name" value="NA-bd_OB-fold"/>
</dbReference>
<dbReference type="InterPro" id="IPR014722">
    <property type="entry name" value="Rib_uL2_dom2"/>
</dbReference>
<dbReference type="InterPro" id="IPR020599">
    <property type="entry name" value="Transl_elong_fac_P/YeiP"/>
</dbReference>
<dbReference type="InterPro" id="IPR013185">
    <property type="entry name" value="Transl_elong_KOW-like"/>
</dbReference>
<dbReference type="InterPro" id="IPR001059">
    <property type="entry name" value="Transl_elong_P/YeiP_cen"/>
</dbReference>
<dbReference type="InterPro" id="IPR013852">
    <property type="entry name" value="Transl_elong_P/YeiP_CS"/>
</dbReference>
<dbReference type="InterPro" id="IPR011768">
    <property type="entry name" value="Transl_elongation_fac_P"/>
</dbReference>
<dbReference type="InterPro" id="IPR008991">
    <property type="entry name" value="Translation_prot_SH3-like_sf"/>
</dbReference>
<dbReference type="NCBIfam" id="TIGR00038">
    <property type="entry name" value="efp"/>
    <property type="match status" value="1"/>
</dbReference>
<dbReference type="NCBIfam" id="NF001810">
    <property type="entry name" value="PRK00529.1"/>
    <property type="match status" value="1"/>
</dbReference>
<dbReference type="PANTHER" id="PTHR30053">
    <property type="entry name" value="ELONGATION FACTOR P"/>
    <property type="match status" value="1"/>
</dbReference>
<dbReference type="PANTHER" id="PTHR30053:SF12">
    <property type="entry name" value="ELONGATION FACTOR P (EF-P) FAMILY PROTEIN"/>
    <property type="match status" value="1"/>
</dbReference>
<dbReference type="Pfam" id="PF01132">
    <property type="entry name" value="EFP"/>
    <property type="match status" value="1"/>
</dbReference>
<dbReference type="Pfam" id="PF08207">
    <property type="entry name" value="EFP_N"/>
    <property type="match status" value="1"/>
</dbReference>
<dbReference type="Pfam" id="PF09285">
    <property type="entry name" value="Elong-fact-P_C"/>
    <property type="match status" value="1"/>
</dbReference>
<dbReference type="PIRSF" id="PIRSF005901">
    <property type="entry name" value="EF-P"/>
    <property type="match status" value="1"/>
</dbReference>
<dbReference type="SMART" id="SM01185">
    <property type="entry name" value="EFP"/>
    <property type="match status" value="1"/>
</dbReference>
<dbReference type="SMART" id="SM00841">
    <property type="entry name" value="Elong-fact-P_C"/>
    <property type="match status" value="1"/>
</dbReference>
<dbReference type="SUPFAM" id="SSF50249">
    <property type="entry name" value="Nucleic acid-binding proteins"/>
    <property type="match status" value="2"/>
</dbReference>
<dbReference type="SUPFAM" id="SSF50104">
    <property type="entry name" value="Translation proteins SH3-like domain"/>
    <property type="match status" value="1"/>
</dbReference>
<dbReference type="PROSITE" id="PS01275">
    <property type="entry name" value="EFP"/>
    <property type="match status" value="1"/>
</dbReference>
<protein>
    <recommendedName>
        <fullName evidence="1">Elongation factor P</fullName>
        <shortName evidence="1">EF-P</shortName>
    </recommendedName>
</protein>
<reference key="1">
    <citation type="journal article" date="2006" name="Proc. Natl. Acad. Sci. U.S.A.">
        <title>Genome reduction in Leptospira borgpetersenii reflects limited transmission potential.</title>
        <authorList>
            <person name="Bulach D.M."/>
            <person name="Zuerner R.L."/>
            <person name="Wilson P."/>
            <person name="Seemann T."/>
            <person name="McGrath A."/>
            <person name="Cullen P.A."/>
            <person name="Davis J."/>
            <person name="Johnson M."/>
            <person name="Kuczek E."/>
            <person name="Alt D.P."/>
            <person name="Peterson-Burch B."/>
            <person name="Coppel R.L."/>
            <person name="Rood J.I."/>
            <person name="Davies J.K."/>
            <person name="Adler B."/>
        </authorList>
    </citation>
    <scope>NUCLEOTIDE SEQUENCE [LARGE SCALE GENOMIC DNA]</scope>
    <source>
        <strain>JB197</strain>
    </source>
</reference>
<proteinExistence type="inferred from homology"/>
<evidence type="ECO:0000255" key="1">
    <source>
        <dbReference type="HAMAP-Rule" id="MF_00141"/>
    </source>
</evidence>
<comment type="function">
    <text evidence="1">Involved in peptide bond synthesis. Stimulates efficient translation and peptide-bond synthesis on native or reconstituted 70S ribosomes in vitro. Probably functions indirectly by altering the affinity of the ribosome for aminoacyl-tRNA, thus increasing their reactivity as acceptors for peptidyl transferase.</text>
</comment>
<comment type="pathway">
    <text evidence="1">Protein biosynthesis; polypeptide chain elongation.</text>
</comment>
<comment type="subcellular location">
    <subcellularLocation>
        <location evidence="1">Cytoplasm</location>
    </subcellularLocation>
</comment>
<comment type="similarity">
    <text evidence="1">Belongs to the elongation factor P family.</text>
</comment>
<gene>
    <name evidence="1" type="primary">efp</name>
    <name type="ordered locus">LBJ_4220</name>
</gene>
<accession>Q04NC1</accession>
<sequence length="188" mass="21144">MTLGITEVKKGMVLKVEGDLYSVVKTEFVNPGKGSAFIRTKLKNLTKNSSIERTFKAAEKLESVELEKRNMTICYTEGNDIIFMDSNDFEQMPVSKEYVEDILPFLKEETPMEVTFYEGKPIGVIPPNFSILEVTYAEEGLKGDTSGTAQKRVTVETGGEINVPIFVKQGDVIKIDLRDLTYVERVSR</sequence>
<keyword id="KW-0963">Cytoplasm</keyword>
<keyword id="KW-0251">Elongation factor</keyword>
<keyword id="KW-0648">Protein biosynthesis</keyword>
<name>EFP_LEPBJ</name>
<feature type="chain" id="PRO_1000010770" description="Elongation factor P">
    <location>
        <begin position="1"/>
        <end position="188"/>
    </location>
</feature>